<protein>
    <recommendedName>
        <fullName evidence="1">Proline--tRNA ligase</fullName>
        <ecNumber evidence="1">6.1.1.15</ecNumber>
    </recommendedName>
    <alternativeName>
        <fullName evidence="1">Prolyl-tRNA synthetase</fullName>
        <shortName evidence="1">ProRS</shortName>
    </alternativeName>
</protein>
<comment type="function">
    <text evidence="1">Catalyzes the attachment of proline to tRNA(Pro) in a two-step reaction: proline is first activated by ATP to form Pro-AMP and then transferred to the acceptor end of tRNA(Pro).</text>
</comment>
<comment type="catalytic activity">
    <reaction evidence="1">
        <text>tRNA(Pro) + L-proline + ATP = L-prolyl-tRNA(Pro) + AMP + diphosphate</text>
        <dbReference type="Rhea" id="RHEA:14305"/>
        <dbReference type="Rhea" id="RHEA-COMP:9700"/>
        <dbReference type="Rhea" id="RHEA-COMP:9702"/>
        <dbReference type="ChEBI" id="CHEBI:30616"/>
        <dbReference type="ChEBI" id="CHEBI:33019"/>
        <dbReference type="ChEBI" id="CHEBI:60039"/>
        <dbReference type="ChEBI" id="CHEBI:78442"/>
        <dbReference type="ChEBI" id="CHEBI:78532"/>
        <dbReference type="ChEBI" id="CHEBI:456215"/>
        <dbReference type="EC" id="6.1.1.15"/>
    </reaction>
</comment>
<comment type="subunit">
    <text evidence="1">Homodimer.</text>
</comment>
<comment type="subcellular location">
    <subcellularLocation>
        <location evidence="1">Cytoplasm</location>
    </subcellularLocation>
</comment>
<comment type="domain">
    <text evidence="1">Consists of three domains: the N-terminal catalytic domain, the anticodon-binding domain and the C-terminal extension.</text>
</comment>
<comment type="similarity">
    <text evidence="1">Belongs to the class-II aminoacyl-tRNA synthetase family. ProS type 3 subfamily.</text>
</comment>
<evidence type="ECO:0000255" key="1">
    <source>
        <dbReference type="HAMAP-Rule" id="MF_01571"/>
    </source>
</evidence>
<keyword id="KW-0030">Aminoacyl-tRNA synthetase</keyword>
<keyword id="KW-0067">ATP-binding</keyword>
<keyword id="KW-0963">Cytoplasm</keyword>
<keyword id="KW-0436">Ligase</keyword>
<keyword id="KW-0547">Nucleotide-binding</keyword>
<keyword id="KW-0648">Protein biosynthesis</keyword>
<sequence>MQITREKWSKNFSEWFDWVLREGEFYDYGRYPVKGMGVWMPYGFKLRQNIISIIRNLLDSTGHEEVLFPLLIPEDLLSRESTHIKGFEEEVFWVTKGGSEDLDVKLALRPTSEVAITTMENLWLKSYKQLPKKYYQIVSVFRYETKATRPMIRLREITTFKEAHTVHETYDDAQRQVEEAIEIYKKIFNNLAIPYVLSERPEWDRFAGALHTYAFDTIMPDGKVMQIGTVHHLGQNFSRALDFKIQKKDGSLDYPHQTSYGISDRAIASVIAIHGDDHGPILPPSVAPIKVVVVPIPAKNEEGTQQVMKYSVEICEMLNKNNITCVTDQDTEKTPGEKFYIWEIKGVPIRLEIGPRELASSTVFIKRRDNLKSYTVKKEEVVNKVKEVLNEIQEDLRKRAWESLKSRIEYANDIEKAKNLLENNSGIVEVPWCGSKECGLKIEELTNARVLGYPIEDRKVNDKCVICKMNAKTVLRVAKTY</sequence>
<dbReference type="EC" id="6.1.1.15" evidence="1"/>
<dbReference type="EMBL" id="CP001401">
    <property type="protein sequence ID" value="ACP55555.1"/>
    <property type="molecule type" value="Genomic_DNA"/>
</dbReference>
<dbReference type="RefSeq" id="WP_012711554.1">
    <property type="nucleotide sequence ID" value="NC_012632.1"/>
</dbReference>
<dbReference type="SMR" id="C3N6D0"/>
<dbReference type="GeneID" id="84053160"/>
<dbReference type="KEGG" id="sim:M1627_1677"/>
<dbReference type="HOGENOM" id="CLU_001882_4_2_2"/>
<dbReference type="Proteomes" id="UP000002307">
    <property type="component" value="Chromosome"/>
</dbReference>
<dbReference type="GO" id="GO:0017101">
    <property type="term" value="C:aminoacyl-tRNA synthetase multienzyme complex"/>
    <property type="evidence" value="ECO:0007669"/>
    <property type="project" value="TreeGrafter"/>
</dbReference>
<dbReference type="GO" id="GO:0005737">
    <property type="term" value="C:cytoplasm"/>
    <property type="evidence" value="ECO:0007669"/>
    <property type="project" value="UniProtKB-SubCell"/>
</dbReference>
<dbReference type="GO" id="GO:0005524">
    <property type="term" value="F:ATP binding"/>
    <property type="evidence" value="ECO:0007669"/>
    <property type="project" value="UniProtKB-UniRule"/>
</dbReference>
<dbReference type="GO" id="GO:0004827">
    <property type="term" value="F:proline-tRNA ligase activity"/>
    <property type="evidence" value="ECO:0007669"/>
    <property type="project" value="UniProtKB-UniRule"/>
</dbReference>
<dbReference type="GO" id="GO:0006433">
    <property type="term" value="P:prolyl-tRNA aminoacylation"/>
    <property type="evidence" value="ECO:0007669"/>
    <property type="project" value="UniProtKB-UniRule"/>
</dbReference>
<dbReference type="CDD" id="cd00862">
    <property type="entry name" value="ProRS_anticodon_zinc"/>
    <property type="match status" value="1"/>
</dbReference>
<dbReference type="CDD" id="cd00778">
    <property type="entry name" value="ProRS_core_arch_euk"/>
    <property type="match status" value="1"/>
</dbReference>
<dbReference type="FunFam" id="3.40.50.800:FF:000005">
    <property type="entry name" value="bifunctional glutamate/proline--tRNA ligase"/>
    <property type="match status" value="1"/>
</dbReference>
<dbReference type="FunFam" id="3.30.930.10:FF:000037">
    <property type="entry name" value="Proline--tRNA ligase"/>
    <property type="match status" value="1"/>
</dbReference>
<dbReference type="Gene3D" id="3.40.50.800">
    <property type="entry name" value="Anticodon-binding domain"/>
    <property type="match status" value="1"/>
</dbReference>
<dbReference type="Gene3D" id="3.30.930.10">
    <property type="entry name" value="Bira Bifunctional Protein, Domain 2"/>
    <property type="match status" value="1"/>
</dbReference>
<dbReference type="Gene3D" id="3.30.110.30">
    <property type="entry name" value="C-terminal domain of ProRS"/>
    <property type="match status" value="1"/>
</dbReference>
<dbReference type="HAMAP" id="MF_01571">
    <property type="entry name" value="Pro_tRNA_synth_type3"/>
    <property type="match status" value="1"/>
</dbReference>
<dbReference type="InterPro" id="IPR002314">
    <property type="entry name" value="aa-tRNA-synt_IIb"/>
</dbReference>
<dbReference type="InterPro" id="IPR006195">
    <property type="entry name" value="aa-tRNA-synth_II"/>
</dbReference>
<dbReference type="InterPro" id="IPR045864">
    <property type="entry name" value="aa-tRNA-synth_II/BPL/LPL"/>
</dbReference>
<dbReference type="InterPro" id="IPR004154">
    <property type="entry name" value="Anticodon-bd"/>
</dbReference>
<dbReference type="InterPro" id="IPR036621">
    <property type="entry name" value="Anticodon-bd_dom_sf"/>
</dbReference>
<dbReference type="InterPro" id="IPR002316">
    <property type="entry name" value="Pro-tRNA-ligase_IIa"/>
</dbReference>
<dbReference type="InterPro" id="IPR004499">
    <property type="entry name" value="Pro-tRNA-ligase_IIa_arc-type"/>
</dbReference>
<dbReference type="InterPro" id="IPR016061">
    <property type="entry name" value="Pro-tRNA_ligase_II_C"/>
</dbReference>
<dbReference type="InterPro" id="IPR017449">
    <property type="entry name" value="Pro-tRNA_synth_II"/>
</dbReference>
<dbReference type="InterPro" id="IPR033721">
    <property type="entry name" value="ProRS_core_arch_euk"/>
</dbReference>
<dbReference type="NCBIfam" id="TIGR00408">
    <property type="entry name" value="proS_fam_I"/>
    <property type="match status" value="1"/>
</dbReference>
<dbReference type="PANTHER" id="PTHR43382:SF2">
    <property type="entry name" value="BIFUNCTIONAL GLUTAMATE_PROLINE--TRNA LIGASE"/>
    <property type="match status" value="1"/>
</dbReference>
<dbReference type="PANTHER" id="PTHR43382">
    <property type="entry name" value="PROLYL-TRNA SYNTHETASE"/>
    <property type="match status" value="1"/>
</dbReference>
<dbReference type="Pfam" id="PF03129">
    <property type="entry name" value="HGTP_anticodon"/>
    <property type="match status" value="1"/>
</dbReference>
<dbReference type="Pfam" id="PF09180">
    <property type="entry name" value="ProRS-C_1"/>
    <property type="match status" value="1"/>
</dbReference>
<dbReference type="Pfam" id="PF00587">
    <property type="entry name" value="tRNA-synt_2b"/>
    <property type="match status" value="1"/>
</dbReference>
<dbReference type="PRINTS" id="PR01046">
    <property type="entry name" value="TRNASYNTHPRO"/>
</dbReference>
<dbReference type="SMART" id="SM00946">
    <property type="entry name" value="ProRS-C_1"/>
    <property type="match status" value="1"/>
</dbReference>
<dbReference type="SUPFAM" id="SSF64586">
    <property type="entry name" value="C-terminal domain of ProRS"/>
    <property type="match status" value="1"/>
</dbReference>
<dbReference type="SUPFAM" id="SSF52954">
    <property type="entry name" value="Class II aaRS ABD-related"/>
    <property type="match status" value="1"/>
</dbReference>
<dbReference type="SUPFAM" id="SSF55681">
    <property type="entry name" value="Class II aaRS and biotin synthetases"/>
    <property type="match status" value="1"/>
</dbReference>
<dbReference type="PROSITE" id="PS50862">
    <property type="entry name" value="AA_TRNA_LIGASE_II"/>
    <property type="match status" value="1"/>
</dbReference>
<proteinExistence type="inferred from homology"/>
<reference key="1">
    <citation type="journal article" date="2009" name="Proc. Natl. Acad. Sci. U.S.A.">
        <title>Biogeography of the Sulfolobus islandicus pan-genome.</title>
        <authorList>
            <person name="Reno M.L."/>
            <person name="Held N.L."/>
            <person name="Fields C.J."/>
            <person name="Burke P.V."/>
            <person name="Whitaker R.J."/>
        </authorList>
    </citation>
    <scope>NUCLEOTIDE SEQUENCE [LARGE SCALE GENOMIC DNA]</scope>
    <source>
        <strain>M.16.27</strain>
    </source>
</reference>
<organism>
    <name type="scientific">Saccharolobus islandicus (strain M.16.27)</name>
    <name type="common">Sulfolobus islandicus</name>
    <dbReference type="NCBI Taxonomy" id="427318"/>
    <lineage>
        <taxon>Archaea</taxon>
        <taxon>Thermoproteota</taxon>
        <taxon>Thermoprotei</taxon>
        <taxon>Sulfolobales</taxon>
        <taxon>Sulfolobaceae</taxon>
        <taxon>Saccharolobus</taxon>
    </lineage>
</organism>
<gene>
    <name evidence="1" type="primary">proS</name>
    <name type="ordered locus">M1627_1677</name>
</gene>
<feature type="chain" id="PRO_1000215575" description="Proline--tRNA ligase">
    <location>
        <begin position="1"/>
        <end position="481"/>
    </location>
</feature>
<accession>C3N6D0</accession>
<name>SYP_SACI3</name>